<accession>B9MR65</accession>
<feature type="chain" id="PRO_1000176946" description="Large ribosomal subunit protein bL31">
    <location>
        <begin position="1"/>
        <end position="69"/>
    </location>
</feature>
<feature type="binding site" evidence="1">
    <location>
        <position position="17"/>
    </location>
    <ligand>
        <name>Zn(2+)</name>
        <dbReference type="ChEBI" id="CHEBI:29105"/>
    </ligand>
</feature>
<feature type="binding site" evidence="1">
    <location>
        <position position="19"/>
    </location>
    <ligand>
        <name>Zn(2+)</name>
        <dbReference type="ChEBI" id="CHEBI:29105"/>
    </ligand>
</feature>
<feature type="binding site" evidence="1">
    <location>
        <position position="37"/>
    </location>
    <ligand>
        <name>Zn(2+)</name>
        <dbReference type="ChEBI" id="CHEBI:29105"/>
    </ligand>
</feature>
<feature type="binding site" evidence="1">
    <location>
        <position position="40"/>
    </location>
    <ligand>
        <name>Zn(2+)</name>
        <dbReference type="ChEBI" id="CHEBI:29105"/>
    </ligand>
</feature>
<evidence type="ECO:0000255" key="1">
    <source>
        <dbReference type="HAMAP-Rule" id="MF_00501"/>
    </source>
</evidence>
<evidence type="ECO:0000305" key="2"/>
<gene>
    <name evidence="1" type="primary">rpmE</name>
    <name type="ordered locus">Athe_1068</name>
</gene>
<protein>
    <recommendedName>
        <fullName evidence="1">Large ribosomal subunit protein bL31</fullName>
    </recommendedName>
    <alternativeName>
        <fullName evidence="2">50S ribosomal protein L31</fullName>
    </alternativeName>
</protein>
<proteinExistence type="inferred from homology"/>
<organism>
    <name type="scientific">Caldicellulosiruptor bescii (strain ATCC BAA-1888 / DSM 6725 / KCTC 15123 / Z-1320)</name>
    <name type="common">Anaerocellum thermophilum</name>
    <dbReference type="NCBI Taxonomy" id="521460"/>
    <lineage>
        <taxon>Bacteria</taxon>
        <taxon>Bacillati</taxon>
        <taxon>Bacillota</taxon>
        <taxon>Bacillota incertae sedis</taxon>
        <taxon>Caldicellulosiruptorales</taxon>
        <taxon>Caldicellulosiruptoraceae</taxon>
        <taxon>Caldicellulosiruptor</taxon>
    </lineage>
</organism>
<comment type="function">
    <text evidence="1">Binds the 23S rRNA.</text>
</comment>
<comment type="cofactor">
    <cofactor evidence="1">
        <name>Zn(2+)</name>
        <dbReference type="ChEBI" id="CHEBI:29105"/>
    </cofactor>
    <text evidence="1">Binds 1 zinc ion per subunit.</text>
</comment>
<comment type="subunit">
    <text evidence="1">Part of the 50S ribosomal subunit.</text>
</comment>
<comment type="similarity">
    <text evidence="1">Belongs to the bacterial ribosomal protein bL31 family. Type A subfamily.</text>
</comment>
<name>RL31_CALBD</name>
<sequence length="69" mass="7958">MKEGIHPTYYHDAVVRCACGETFITGSTKKEIHVEICSKCHPFFTGKQKFVDTTGRVERFMKKYGLDQK</sequence>
<keyword id="KW-0479">Metal-binding</keyword>
<keyword id="KW-0687">Ribonucleoprotein</keyword>
<keyword id="KW-0689">Ribosomal protein</keyword>
<keyword id="KW-0694">RNA-binding</keyword>
<keyword id="KW-0699">rRNA-binding</keyword>
<keyword id="KW-0862">Zinc</keyword>
<dbReference type="EMBL" id="CP001393">
    <property type="protein sequence ID" value="ACM60169.1"/>
    <property type="molecule type" value="Genomic_DNA"/>
</dbReference>
<dbReference type="RefSeq" id="WP_013430572.1">
    <property type="nucleotide sequence ID" value="NC_012034.1"/>
</dbReference>
<dbReference type="STRING" id="521460.Athe_1068"/>
<dbReference type="GeneID" id="31772419"/>
<dbReference type="KEGG" id="ate:Athe_1068"/>
<dbReference type="eggNOG" id="COG0254">
    <property type="taxonomic scope" value="Bacteria"/>
</dbReference>
<dbReference type="HOGENOM" id="CLU_114306_4_3_9"/>
<dbReference type="Proteomes" id="UP000007723">
    <property type="component" value="Chromosome"/>
</dbReference>
<dbReference type="GO" id="GO:1990904">
    <property type="term" value="C:ribonucleoprotein complex"/>
    <property type="evidence" value="ECO:0007669"/>
    <property type="project" value="UniProtKB-KW"/>
</dbReference>
<dbReference type="GO" id="GO:0005840">
    <property type="term" value="C:ribosome"/>
    <property type="evidence" value="ECO:0007669"/>
    <property type="project" value="UniProtKB-KW"/>
</dbReference>
<dbReference type="GO" id="GO:0046872">
    <property type="term" value="F:metal ion binding"/>
    <property type="evidence" value="ECO:0007669"/>
    <property type="project" value="UniProtKB-KW"/>
</dbReference>
<dbReference type="GO" id="GO:0019843">
    <property type="term" value="F:rRNA binding"/>
    <property type="evidence" value="ECO:0007669"/>
    <property type="project" value="UniProtKB-KW"/>
</dbReference>
<dbReference type="GO" id="GO:0003735">
    <property type="term" value="F:structural constituent of ribosome"/>
    <property type="evidence" value="ECO:0007669"/>
    <property type="project" value="InterPro"/>
</dbReference>
<dbReference type="GO" id="GO:0006412">
    <property type="term" value="P:translation"/>
    <property type="evidence" value="ECO:0007669"/>
    <property type="project" value="UniProtKB-UniRule"/>
</dbReference>
<dbReference type="Gene3D" id="4.10.830.30">
    <property type="entry name" value="Ribosomal protein L31"/>
    <property type="match status" value="1"/>
</dbReference>
<dbReference type="HAMAP" id="MF_00501">
    <property type="entry name" value="Ribosomal_bL31_1"/>
    <property type="match status" value="1"/>
</dbReference>
<dbReference type="InterPro" id="IPR034704">
    <property type="entry name" value="Ribosomal_bL28/bL31-like_sf"/>
</dbReference>
<dbReference type="InterPro" id="IPR002150">
    <property type="entry name" value="Ribosomal_bL31"/>
</dbReference>
<dbReference type="InterPro" id="IPR027491">
    <property type="entry name" value="Ribosomal_bL31_A"/>
</dbReference>
<dbReference type="InterPro" id="IPR042105">
    <property type="entry name" value="Ribosomal_bL31_sf"/>
</dbReference>
<dbReference type="NCBIfam" id="TIGR00105">
    <property type="entry name" value="L31"/>
    <property type="match status" value="1"/>
</dbReference>
<dbReference type="NCBIfam" id="NF000612">
    <property type="entry name" value="PRK00019.1"/>
    <property type="match status" value="1"/>
</dbReference>
<dbReference type="NCBIfam" id="NF001809">
    <property type="entry name" value="PRK00528.1"/>
    <property type="match status" value="1"/>
</dbReference>
<dbReference type="PANTHER" id="PTHR33280">
    <property type="entry name" value="50S RIBOSOMAL PROTEIN L31, CHLOROPLASTIC"/>
    <property type="match status" value="1"/>
</dbReference>
<dbReference type="PANTHER" id="PTHR33280:SF1">
    <property type="entry name" value="LARGE RIBOSOMAL SUBUNIT PROTEIN BL31C"/>
    <property type="match status" value="1"/>
</dbReference>
<dbReference type="Pfam" id="PF01197">
    <property type="entry name" value="Ribosomal_L31"/>
    <property type="match status" value="1"/>
</dbReference>
<dbReference type="PRINTS" id="PR01249">
    <property type="entry name" value="RIBOSOMALL31"/>
</dbReference>
<dbReference type="SUPFAM" id="SSF143800">
    <property type="entry name" value="L28p-like"/>
    <property type="match status" value="1"/>
</dbReference>
<dbReference type="PROSITE" id="PS01143">
    <property type="entry name" value="RIBOSOMAL_L31"/>
    <property type="match status" value="1"/>
</dbReference>
<reference key="1">
    <citation type="submission" date="2009-01" db="EMBL/GenBank/DDBJ databases">
        <title>Complete sequence of chromosome of Caldicellulosiruptor becscii DSM 6725.</title>
        <authorList>
            <person name="Lucas S."/>
            <person name="Copeland A."/>
            <person name="Lapidus A."/>
            <person name="Glavina del Rio T."/>
            <person name="Tice H."/>
            <person name="Bruce D."/>
            <person name="Goodwin L."/>
            <person name="Pitluck S."/>
            <person name="Sims D."/>
            <person name="Meincke L."/>
            <person name="Brettin T."/>
            <person name="Detter J.C."/>
            <person name="Han C."/>
            <person name="Larimer F."/>
            <person name="Land M."/>
            <person name="Hauser L."/>
            <person name="Kyrpides N."/>
            <person name="Ovchinnikova G."/>
            <person name="Kataeva I."/>
            <person name="Adams M.W.W."/>
        </authorList>
    </citation>
    <scope>NUCLEOTIDE SEQUENCE [LARGE SCALE GENOMIC DNA]</scope>
    <source>
        <strain>ATCC BAA-1888 / DSM 6725 / KCTC 15123 / Z-1320</strain>
    </source>
</reference>